<protein>
    <recommendedName>
        <fullName evidence="1">4-hydroxy-tetrahydrodipicolinate synthase</fullName>
        <shortName evidence="1">HTPA synthase</shortName>
        <ecNumber evidence="1">4.3.3.7</ecNumber>
    </recommendedName>
</protein>
<organism>
    <name type="scientific">Rickettsia africae (strain ESF-5)</name>
    <dbReference type="NCBI Taxonomy" id="347255"/>
    <lineage>
        <taxon>Bacteria</taxon>
        <taxon>Pseudomonadati</taxon>
        <taxon>Pseudomonadota</taxon>
        <taxon>Alphaproteobacteria</taxon>
        <taxon>Rickettsiales</taxon>
        <taxon>Rickettsiaceae</taxon>
        <taxon>Rickettsieae</taxon>
        <taxon>Rickettsia</taxon>
        <taxon>spotted fever group</taxon>
    </lineage>
</organism>
<keyword id="KW-0028">Amino-acid biosynthesis</keyword>
<keyword id="KW-0963">Cytoplasm</keyword>
<keyword id="KW-0220">Diaminopimelate biosynthesis</keyword>
<keyword id="KW-0456">Lyase</keyword>
<keyword id="KW-0457">Lysine biosynthesis</keyword>
<keyword id="KW-0704">Schiff base</keyword>
<reference key="1">
    <citation type="journal article" date="2009" name="BMC Genomics">
        <title>Analysis of the Rickettsia africae genome reveals that virulence acquisition in Rickettsia species may be explained by genome reduction.</title>
        <authorList>
            <person name="Fournier P.-E."/>
            <person name="El Karkouri K."/>
            <person name="Leroy Q."/>
            <person name="Robert C."/>
            <person name="Giumelli B."/>
            <person name="Renesto P."/>
            <person name="Socolovschi C."/>
            <person name="Parola P."/>
            <person name="Audic S."/>
            <person name="Raoult D."/>
        </authorList>
    </citation>
    <scope>NUCLEOTIDE SEQUENCE [LARGE SCALE GENOMIC DNA]</scope>
    <source>
        <strain>ESF-5</strain>
    </source>
</reference>
<feature type="chain" id="PRO_1000206035" description="4-hydroxy-tetrahydrodipicolinate synthase">
    <location>
        <begin position="1"/>
        <end position="294"/>
    </location>
</feature>
<feature type="active site" description="Proton donor/acceptor" evidence="1">
    <location>
        <position position="135"/>
    </location>
</feature>
<feature type="active site" description="Schiff-base intermediate with substrate" evidence="1">
    <location>
        <position position="163"/>
    </location>
</feature>
<feature type="binding site" evidence="1">
    <location>
        <position position="47"/>
    </location>
    <ligand>
        <name>pyruvate</name>
        <dbReference type="ChEBI" id="CHEBI:15361"/>
    </ligand>
</feature>
<feature type="binding site" evidence="1">
    <location>
        <position position="205"/>
    </location>
    <ligand>
        <name>pyruvate</name>
        <dbReference type="ChEBI" id="CHEBI:15361"/>
    </ligand>
</feature>
<feature type="site" description="Part of a proton relay during catalysis" evidence="1">
    <location>
        <position position="46"/>
    </location>
</feature>
<feature type="site" description="Part of a proton relay during catalysis" evidence="1">
    <location>
        <position position="109"/>
    </location>
</feature>
<gene>
    <name evidence="1" type="primary">dapA</name>
    <name type="ordered locus">RAF_ORF0554</name>
</gene>
<name>DAPA_RICAE</name>
<accession>C3PNF5</accession>
<evidence type="ECO:0000255" key="1">
    <source>
        <dbReference type="HAMAP-Rule" id="MF_00418"/>
    </source>
</evidence>
<evidence type="ECO:0000305" key="2"/>
<proteinExistence type="inferred from homology"/>
<comment type="function">
    <text evidence="1">Catalyzes the condensation of (S)-aspartate-beta-semialdehyde [(S)-ASA] and pyruvate to 4-hydroxy-tetrahydrodipicolinate (HTPA).</text>
</comment>
<comment type="catalytic activity">
    <reaction evidence="1">
        <text>L-aspartate 4-semialdehyde + pyruvate = (2S,4S)-4-hydroxy-2,3,4,5-tetrahydrodipicolinate + H2O + H(+)</text>
        <dbReference type="Rhea" id="RHEA:34171"/>
        <dbReference type="ChEBI" id="CHEBI:15361"/>
        <dbReference type="ChEBI" id="CHEBI:15377"/>
        <dbReference type="ChEBI" id="CHEBI:15378"/>
        <dbReference type="ChEBI" id="CHEBI:67139"/>
        <dbReference type="ChEBI" id="CHEBI:537519"/>
        <dbReference type="EC" id="4.3.3.7"/>
    </reaction>
</comment>
<comment type="pathway">
    <text evidence="1">Amino-acid biosynthesis; L-lysine biosynthesis via DAP pathway; (S)-tetrahydrodipicolinate from L-aspartate: step 3/4.</text>
</comment>
<comment type="subunit">
    <text evidence="1">Homotetramer; dimer of dimers.</text>
</comment>
<comment type="subcellular location">
    <subcellularLocation>
        <location evidence="1">Cytoplasm</location>
    </subcellularLocation>
</comment>
<comment type="similarity">
    <text evidence="1">Belongs to the DapA family.</text>
</comment>
<comment type="caution">
    <text evidence="2">Was originally thought to be a dihydrodipicolinate synthase (DHDPS), catalyzing the condensation of (S)-aspartate-beta-semialdehyde [(S)-ASA] and pyruvate to dihydrodipicolinate (DHDP). However, it was shown in E.coli that the product of the enzymatic reaction is not dihydrodipicolinate but in fact (4S)-4-hydroxy-2,3,4,5-tetrahydro-(2S)-dipicolinic acid (HTPA), and that the consecutive dehydration reaction leading to DHDP is not spontaneous but catalyzed by DapB.</text>
</comment>
<dbReference type="EC" id="4.3.3.7" evidence="1"/>
<dbReference type="EMBL" id="CP001612">
    <property type="protein sequence ID" value="ACP53465.1"/>
    <property type="molecule type" value="Genomic_DNA"/>
</dbReference>
<dbReference type="RefSeq" id="WP_012719683.1">
    <property type="nucleotide sequence ID" value="NC_012633.1"/>
</dbReference>
<dbReference type="SMR" id="C3PNF5"/>
<dbReference type="KEGG" id="raf:RAF_ORF0554"/>
<dbReference type="HOGENOM" id="CLU_049343_7_1_5"/>
<dbReference type="UniPathway" id="UPA00034">
    <property type="reaction ID" value="UER00017"/>
</dbReference>
<dbReference type="Proteomes" id="UP000002305">
    <property type="component" value="Chromosome"/>
</dbReference>
<dbReference type="GO" id="GO:0005737">
    <property type="term" value="C:cytoplasm"/>
    <property type="evidence" value="ECO:0007669"/>
    <property type="project" value="UniProtKB-SubCell"/>
</dbReference>
<dbReference type="GO" id="GO:0008700">
    <property type="term" value="F:(R,S)-4-hydroxy-2-oxoglutarate aldolase activity"/>
    <property type="evidence" value="ECO:0007669"/>
    <property type="project" value="TreeGrafter"/>
</dbReference>
<dbReference type="GO" id="GO:0008840">
    <property type="term" value="F:4-hydroxy-tetrahydrodipicolinate synthase activity"/>
    <property type="evidence" value="ECO:0007669"/>
    <property type="project" value="UniProtKB-UniRule"/>
</dbReference>
<dbReference type="GO" id="GO:0019877">
    <property type="term" value="P:diaminopimelate biosynthetic process"/>
    <property type="evidence" value="ECO:0007669"/>
    <property type="project" value="UniProtKB-UniRule"/>
</dbReference>
<dbReference type="GO" id="GO:0009436">
    <property type="term" value="P:glyoxylate catabolic process"/>
    <property type="evidence" value="ECO:0007669"/>
    <property type="project" value="TreeGrafter"/>
</dbReference>
<dbReference type="GO" id="GO:0009089">
    <property type="term" value="P:lysine biosynthetic process via diaminopimelate"/>
    <property type="evidence" value="ECO:0007669"/>
    <property type="project" value="UniProtKB-UniRule"/>
</dbReference>
<dbReference type="CDD" id="cd00950">
    <property type="entry name" value="DHDPS"/>
    <property type="match status" value="1"/>
</dbReference>
<dbReference type="Gene3D" id="3.20.20.70">
    <property type="entry name" value="Aldolase class I"/>
    <property type="match status" value="1"/>
</dbReference>
<dbReference type="HAMAP" id="MF_00418">
    <property type="entry name" value="DapA"/>
    <property type="match status" value="1"/>
</dbReference>
<dbReference type="InterPro" id="IPR013785">
    <property type="entry name" value="Aldolase_TIM"/>
</dbReference>
<dbReference type="InterPro" id="IPR005263">
    <property type="entry name" value="DapA"/>
</dbReference>
<dbReference type="InterPro" id="IPR002220">
    <property type="entry name" value="DapA-like"/>
</dbReference>
<dbReference type="InterPro" id="IPR020625">
    <property type="entry name" value="Schiff_base-form_aldolases_AS"/>
</dbReference>
<dbReference type="InterPro" id="IPR020624">
    <property type="entry name" value="Schiff_base-form_aldolases_CS"/>
</dbReference>
<dbReference type="NCBIfam" id="TIGR00674">
    <property type="entry name" value="dapA"/>
    <property type="match status" value="1"/>
</dbReference>
<dbReference type="PANTHER" id="PTHR12128:SF66">
    <property type="entry name" value="4-HYDROXY-2-OXOGLUTARATE ALDOLASE, MITOCHONDRIAL"/>
    <property type="match status" value="1"/>
</dbReference>
<dbReference type="PANTHER" id="PTHR12128">
    <property type="entry name" value="DIHYDRODIPICOLINATE SYNTHASE"/>
    <property type="match status" value="1"/>
</dbReference>
<dbReference type="Pfam" id="PF00701">
    <property type="entry name" value="DHDPS"/>
    <property type="match status" value="1"/>
</dbReference>
<dbReference type="PIRSF" id="PIRSF001365">
    <property type="entry name" value="DHDPS"/>
    <property type="match status" value="1"/>
</dbReference>
<dbReference type="PRINTS" id="PR00146">
    <property type="entry name" value="DHPICSNTHASE"/>
</dbReference>
<dbReference type="SMART" id="SM01130">
    <property type="entry name" value="DHDPS"/>
    <property type="match status" value="1"/>
</dbReference>
<dbReference type="SUPFAM" id="SSF51569">
    <property type="entry name" value="Aldolase"/>
    <property type="match status" value="1"/>
</dbReference>
<dbReference type="PROSITE" id="PS00665">
    <property type="entry name" value="DHDPS_1"/>
    <property type="match status" value="1"/>
</dbReference>
<dbReference type="PROSITE" id="PS00666">
    <property type="entry name" value="DHDPS_2"/>
    <property type="match status" value="1"/>
</dbReference>
<sequence length="294" mass="32504">MHNIFKGLITALITPFKDNKLDLYALERIVKHQIKHEVDAVLIAGSTGESSSLSFEEYKLLLQTSVEIVNKCIPIISGCSSNNTTYARALAAESTKIGVDGFMASPPSYVKPTQHGIYKHFEALHEVCNLPIMLYSAPTRSGVDFSDETILRLSKLPRILALKDCGVDLERPLRIRATVKKDFNILTGNDEVVLAFNAQGGVGWTSVASNIVPNICKELLEKWNKNDTKGALEIHQKLLPLYTALFVESNPIPIKYAAHYLGLCENEIRPPLTEASDSAKKQIENIITSLSIKI</sequence>